<accession>Q8P0I6</accession>
<protein>
    <recommendedName>
        <fullName evidence="1">GTPase Obg</fullName>
        <ecNumber evidence="1">3.6.5.-</ecNumber>
    </recommendedName>
    <alternativeName>
        <fullName evidence="1">GTP-binding protein Obg</fullName>
    </alternativeName>
</protein>
<gene>
    <name evidence="1" type="primary">obg</name>
    <name type="ordered locus">spyM18_1342</name>
</gene>
<organism>
    <name type="scientific">Streptococcus pyogenes serotype M18 (strain MGAS8232)</name>
    <dbReference type="NCBI Taxonomy" id="186103"/>
    <lineage>
        <taxon>Bacteria</taxon>
        <taxon>Bacillati</taxon>
        <taxon>Bacillota</taxon>
        <taxon>Bacilli</taxon>
        <taxon>Lactobacillales</taxon>
        <taxon>Streptococcaceae</taxon>
        <taxon>Streptococcus</taxon>
    </lineage>
</organism>
<sequence length="437" mass="48337">MSMFLDTAKISVQAGRGGDGMVAFRREKYVPNGGPWGGDGGKGGSVIFRVDEGLRTLMDFRYNRKFKAKSGEKGMTKGMHGRGAEDLIVFVPQGTTVRDAETGKVITDLVEHGQEVVIAKGGRGGRGNIRFATPRNPAPEIAENGEPGEERQLELELKILADVGLVGFPSVGKSTLLSVVSSAKPKIGAYHFTTIVPNLGMVRTKSGDSFAMADLPGLIEGASQGVGLGTQFLRHIERTRVILHVIDMSASEGRDPYEDYVSINNELETYNLRLMERPQIIVANKMDMPEAQENLKAFKKKLAAQYDEFDDLPMIFPISSLAHQGLENLLEATAELLAKTDEFLLYDESDLVDEEAYYGFAEAEKDFEITRDDDATWVLSGEKLERLFVMTNMERDESIMKFARQLRGMGVDEALRERGAKDGDLVRIGKFEFEFVD</sequence>
<feature type="chain" id="PRO_0000386307" description="GTPase Obg">
    <location>
        <begin position="1"/>
        <end position="437"/>
    </location>
</feature>
<feature type="domain" description="Obg" evidence="3">
    <location>
        <begin position="2"/>
        <end position="160"/>
    </location>
</feature>
<feature type="domain" description="OBG-type G" evidence="1">
    <location>
        <begin position="161"/>
        <end position="338"/>
    </location>
</feature>
<feature type="domain" description="OCT" evidence="2">
    <location>
        <begin position="359"/>
        <end position="437"/>
    </location>
</feature>
<feature type="binding site" evidence="1">
    <location>
        <begin position="167"/>
        <end position="174"/>
    </location>
    <ligand>
        <name>GTP</name>
        <dbReference type="ChEBI" id="CHEBI:37565"/>
    </ligand>
</feature>
<feature type="binding site" evidence="1">
    <location>
        <position position="174"/>
    </location>
    <ligand>
        <name>Mg(2+)</name>
        <dbReference type="ChEBI" id="CHEBI:18420"/>
    </ligand>
</feature>
<feature type="binding site" evidence="1">
    <location>
        <begin position="192"/>
        <end position="196"/>
    </location>
    <ligand>
        <name>GTP</name>
        <dbReference type="ChEBI" id="CHEBI:37565"/>
    </ligand>
</feature>
<feature type="binding site" evidence="1">
    <location>
        <position position="194"/>
    </location>
    <ligand>
        <name>Mg(2+)</name>
        <dbReference type="ChEBI" id="CHEBI:18420"/>
    </ligand>
</feature>
<feature type="binding site" evidence="1">
    <location>
        <begin position="214"/>
        <end position="217"/>
    </location>
    <ligand>
        <name>GTP</name>
        <dbReference type="ChEBI" id="CHEBI:37565"/>
    </ligand>
</feature>
<feature type="binding site" evidence="1">
    <location>
        <begin position="284"/>
        <end position="287"/>
    </location>
    <ligand>
        <name>GTP</name>
        <dbReference type="ChEBI" id="CHEBI:37565"/>
    </ligand>
</feature>
<feature type="binding site" evidence="1">
    <location>
        <begin position="319"/>
        <end position="321"/>
    </location>
    <ligand>
        <name>GTP</name>
        <dbReference type="ChEBI" id="CHEBI:37565"/>
    </ligand>
</feature>
<reference key="1">
    <citation type="journal article" date="2002" name="Proc. Natl. Acad. Sci. U.S.A.">
        <title>Genome sequence and comparative microarray analysis of serotype M18 group A Streptococcus strains associated with acute rheumatic fever outbreaks.</title>
        <authorList>
            <person name="Smoot J.C."/>
            <person name="Barbian K.D."/>
            <person name="Van Gompel J.J."/>
            <person name="Smoot L.M."/>
            <person name="Chaussee M.S."/>
            <person name="Sylva G.L."/>
            <person name="Sturdevant D.E."/>
            <person name="Ricklefs S.M."/>
            <person name="Porcella S.F."/>
            <person name="Parkins L.D."/>
            <person name="Beres S.B."/>
            <person name="Campbell D.S."/>
            <person name="Smith T.M."/>
            <person name="Zhang Q."/>
            <person name="Kapur V."/>
            <person name="Daly J.A."/>
            <person name="Veasy L.G."/>
            <person name="Musser J.M."/>
        </authorList>
    </citation>
    <scope>NUCLEOTIDE SEQUENCE [LARGE SCALE GENOMIC DNA]</scope>
    <source>
        <strain>MGAS8232</strain>
    </source>
</reference>
<keyword id="KW-0963">Cytoplasm</keyword>
<keyword id="KW-0342">GTP-binding</keyword>
<keyword id="KW-0378">Hydrolase</keyword>
<keyword id="KW-0460">Magnesium</keyword>
<keyword id="KW-0479">Metal-binding</keyword>
<keyword id="KW-0547">Nucleotide-binding</keyword>
<comment type="function">
    <text evidence="1">An essential GTPase which binds GTP, GDP and possibly (p)ppGpp with moderate affinity, with high nucleotide exchange rates and a fairly low GTP hydrolysis rate. Plays a role in control of the cell cycle, stress response, ribosome biogenesis and in those bacteria that undergo differentiation, in morphogenesis control.</text>
</comment>
<comment type="cofactor">
    <cofactor evidence="1">
        <name>Mg(2+)</name>
        <dbReference type="ChEBI" id="CHEBI:18420"/>
    </cofactor>
</comment>
<comment type="subunit">
    <text evidence="1">Monomer.</text>
</comment>
<comment type="subcellular location">
    <subcellularLocation>
        <location evidence="1">Cytoplasm</location>
    </subcellularLocation>
</comment>
<comment type="similarity">
    <text evidence="1">Belongs to the TRAFAC class OBG-HflX-like GTPase superfamily. OBG GTPase family.</text>
</comment>
<dbReference type="EC" id="3.6.5.-" evidence="1"/>
<dbReference type="EMBL" id="AE009949">
    <property type="protein sequence ID" value="AAL97943.1"/>
    <property type="molecule type" value="Genomic_DNA"/>
</dbReference>
<dbReference type="SMR" id="Q8P0I6"/>
<dbReference type="KEGG" id="spm:spyM18_1342"/>
<dbReference type="HOGENOM" id="CLU_011747_2_1_9"/>
<dbReference type="GO" id="GO:0005737">
    <property type="term" value="C:cytoplasm"/>
    <property type="evidence" value="ECO:0007669"/>
    <property type="project" value="UniProtKB-SubCell"/>
</dbReference>
<dbReference type="GO" id="GO:0005525">
    <property type="term" value="F:GTP binding"/>
    <property type="evidence" value="ECO:0007669"/>
    <property type="project" value="UniProtKB-UniRule"/>
</dbReference>
<dbReference type="GO" id="GO:0003924">
    <property type="term" value="F:GTPase activity"/>
    <property type="evidence" value="ECO:0007669"/>
    <property type="project" value="UniProtKB-UniRule"/>
</dbReference>
<dbReference type="GO" id="GO:0000287">
    <property type="term" value="F:magnesium ion binding"/>
    <property type="evidence" value="ECO:0007669"/>
    <property type="project" value="InterPro"/>
</dbReference>
<dbReference type="GO" id="GO:0042254">
    <property type="term" value="P:ribosome biogenesis"/>
    <property type="evidence" value="ECO:0007669"/>
    <property type="project" value="UniProtKB-UniRule"/>
</dbReference>
<dbReference type="CDD" id="cd01898">
    <property type="entry name" value="Obg"/>
    <property type="match status" value="1"/>
</dbReference>
<dbReference type="FunFam" id="2.70.210.12:FF:000001">
    <property type="entry name" value="GTPase Obg"/>
    <property type="match status" value="1"/>
</dbReference>
<dbReference type="FunFam" id="3.40.50.300:FF:000515">
    <property type="entry name" value="GTPase Obg"/>
    <property type="match status" value="1"/>
</dbReference>
<dbReference type="Gene3D" id="3.30.300.350">
    <property type="entry name" value="GTP-binding protein OBG, C-terminal domain"/>
    <property type="match status" value="1"/>
</dbReference>
<dbReference type="Gene3D" id="2.70.210.12">
    <property type="entry name" value="GTP1/OBG domain"/>
    <property type="match status" value="1"/>
</dbReference>
<dbReference type="Gene3D" id="3.40.50.300">
    <property type="entry name" value="P-loop containing nucleotide triphosphate hydrolases"/>
    <property type="match status" value="1"/>
</dbReference>
<dbReference type="HAMAP" id="MF_01454">
    <property type="entry name" value="GTPase_Obg"/>
    <property type="match status" value="1"/>
</dbReference>
<dbReference type="InterPro" id="IPR031167">
    <property type="entry name" value="G_OBG"/>
</dbReference>
<dbReference type="InterPro" id="IPR006073">
    <property type="entry name" value="GTP-bd"/>
</dbReference>
<dbReference type="InterPro" id="IPR014100">
    <property type="entry name" value="GTP-bd_Obg/CgtA"/>
</dbReference>
<dbReference type="InterPro" id="IPR036346">
    <property type="entry name" value="GTP-bd_prot_GTP1/OBG_C_sf"/>
</dbReference>
<dbReference type="InterPro" id="IPR006074">
    <property type="entry name" value="GTP1-OBG_CS"/>
</dbReference>
<dbReference type="InterPro" id="IPR006169">
    <property type="entry name" value="GTP1_OBG_dom"/>
</dbReference>
<dbReference type="InterPro" id="IPR036726">
    <property type="entry name" value="GTP1_OBG_dom_sf"/>
</dbReference>
<dbReference type="InterPro" id="IPR045086">
    <property type="entry name" value="OBG_GTPase"/>
</dbReference>
<dbReference type="InterPro" id="IPR015349">
    <property type="entry name" value="OCT_dom"/>
</dbReference>
<dbReference type="InterPro" id="IPR027417">
    <property type="entry name" value="P-loop_NTPase"/>
</dbReference>
<dbReference type="InterPro" id="IPR005225">
    <property type="entry name" value="Small_GTP-bd"/>
</dbReference>
<dbReference type="NCBIfam" id="TIGR02729">
    <property type="entry name" value="Obg_CgtA"/>
    <property type="match status" value="1"/>
</dbReference>
<dbReference type="NCBIfam" id="TIGR03595">
    <property type="entry name" value="Obg_CgtA_exten"/>
    <property type="match status" value="1"/>
</dbReference>
<dbReference type="NCBIfam" id="NF008954">
    <property type="entry name" value="PRK12296.1"/>
    <property type="match status" value="1"/>
</dbReference>
<dbReference type="NCBIfam" id="NF008955">
    <property type="entry name" value="PRK12297.1"/>
    <property type="match status" value="1"/>
</dbReference>
<dbReference type="NCBIfam" id="NF008956">
    <property type="entry name" value="PRK12299.1"/>
    <property type="match status" value="1"/>
</dbReference>
<dbReference type="NCBIfam" id="TIGR00231">
    <property type="entry name" value="small_GTP"/>
    <property type="match status" value="1"/>
</dbReference>
<dbReference type="PANTHER" id="PTHR11702">
    <property type="entry name" value="DEVELOPMENTALLY REGULATED GTP-BINDING PROTEIN-RELATED"/>
    <property type="match status" value="1"/>
</dbReference>
<dbReference type="PANTHER" id="PTHR11702:SF31">
    <property type="entry name" value="MITOCHONDRIAL RIBOSOME-ASSOCIATED GTPASE 2"/>
    <property type="match status" value="1"/>
</dbReference>
<dbReference type="Pfam" id="PF09269">
    <property type="entry name" value="DUF1967"/>
    <property type="match status" value="1"/>
</dbReference>
<dbReference type="Pfam" id="PF01018">
    <property type="entry name" value="GTP1_OBG"/>
    <property type="match status" value="1"/>
</dbReference>
<dbReference type="Pfam" id="PF01926">
    <property type="entry name" value="MMR_HSR1"/>
    <property type="match status" value="1"/>
</dbReference>
<dbReference type="PIRSF" id="PIRSF002401">
    <property type="entry name" value="GTP_bd_Obg/CgtA"/>
    <property type="match status" value="1"/>
</dbReference>
<dbReference type="PRINTS" id="PR00326">
    <property type="entry name" value="GTP1OBG"/>
</dbReference>
<dbReference type="SUPFAM" id="SSF102741">
    <property type="entry name" value="Obg GTP-binding protein C-terminal domain"/>
    <property type="match status" value="1"/>
</dbReference>
<dbReference type="SUPFAM" id="SSF82051">
    <property type="entry name" value="Obg GTP-binding protein N-terminal domain"/>
    <property type="match status" value="1"/>
</dbReference>
<dbReference type="SUPFAM" id="SSF52540">
    <property type="entry name" value="P-loop containing nucleoside triphosphate hydrolases"/>
    <property type="match status" value="1"/>
</dbReference>
<dbReference type="PROSITE" id="PS51710">
    <property type="entry name" value="G_OBG"/>
    <property type="match status" value="1"/>
</dbReference>
<dbReference type="PROSITE" id="PS00905">
    <property type="entry name" value="GTP1_OBG"/>
    <property type="match status" value="1"/>
</dbReference>
<dbReference type="PROSITE" id="PS51883">
    <property type="entry name" value="OBG"/>
    <property type="match status" value="1"/>
</dbReference>
<dbReference type="PROSITE" id="PS51881">
    <property type="entry name" value="OCT"/>
    <property type="match status" value="1"/>
</dbReference>
<name>OBG_STRP8</name>
<evidence type="ECO:0000255" key="1">
    <source>
        <dbReference type="HAMAP-Rule" id="MF_01454"/>
    </source>
</evidence>
<evidence type="ECO:0000255" key="2">
    <source>
        <dbReference type="PROSITE-ProRule" id="PRU01229"/>
    </source>
</evidence>
<evidence type="ECO:0000255" key="3">
    <source>
        <dbReference type="PROSITE-ProRule" id="PRU01231"/>
    </source>
</evidence>
<proteinExistence type="inferred from homology"/>